<name>MDEP_STAAU</name>
<reference key="1">
    <citation type="journal article" date="2002" name="Biol. Pharm. Bull.">
        <title>Cloning and characterization of a novel chromosomal drug efflux gene in Staphylococcus aureus.</title>
        <authorList>
            <person name="Narui K."/>
            <person name="Noguchi N."/>
            <person name="Wakasugi K."/>
            <person name="Sasatsu M."/>
        </authorList>
    </citation>
    <scope>NUCLEOTIDE SEQUENCE [GENOMIC DNA]</scope>
    <scope>FUNCTION IN DRUG EFFLUX</scope>
    <source>
        <strain>RN2677</strain>
    </source>
</reference>
<protein>
    <recommendedName>
        <fullName>Multidrug resistance efflux pump SepA</fullName>
    </recommendedName>
    <alternativeName>
        <fullName>Antiseptic resistance protein SepA</fullName>
    </alternativeName>
    <alternativeName>
        <fullName>Staphylococcal efflux pump A</fullName>
    </alternativeName>
</protein>
<feature type="chain" id="PRO_0000351482" description="Multidrug resistance efflux pump SepA">
    <location>
        <begin position="1"/>
        <end position="157"/>
    </location>
</feature>
<feature type="transmembrane region" description="Helical" evidence="1">
    <location>
        <begin position="18"/>
        <end position="38"/>
    </location>
</feature>
<feature type="transmembrane region" description="Helical" evidence="1">
    <location>
        <begin position="63"/>
        <end position="83"/>
    </location>
</feature>
<feature type="transmembrane region" description="Helical" evidence="1">
    <location>
        <begin position="100"/>
        <end position="120"/>
    </location>
</feature>
<feature type="transmembrane region" description="Helical" evidence="1">
    <location>
        <begin position="122"/>
        <end position="142"/>
    </location>
</feature>
<organism>
    <name type="scientific">Staphylococcus aureus</name>
    <dbReference type="NCBI Taxonomy" id="1280"/>
    <lineage>
        <taxon>Bacteria</taxon>
        <taxon>Bacillati</taxon>
        <taxon>Bacillota</taxon>
        <taxon>Bacilli</taxon>
        <taxon>Bacillales</taxon>
        <taxon>Staphylococcaceae</taxon>
        <taxon>Staphylococcus</taxon>
    </lineage>
</organism>
<dbReference type="EMBL" id="AB078343">
    <property type="protein sequence ID" value="BAB83937.1"/>
    <property type="molecule type" value="Genomic_DNA"/>
</dbReference>
<dbReference type="RefSeq" id="WP_000636857.1">
    <property type="nucleotide sequence ID" value="NZ_WYDB01000011.1"/>
</dbReference>
<dbReference type="OMA" id="ICKEVFY"/>
<dbReference type="GO" id="GO:0005886">
    <property type="term" value="C:plasma membrane"/>
    <property type="evidence" value="ECO:0007669"/>
    <property type="project" value="UniProtKB-SubCell"/>
</dbReference>
<dbReference type="InterPro" id="IPR031396">
    <property type="entry name" value="SepA"/>
</dbReference>
<dbReference type="Pfam" id="PF17080">
    <property type="entry name" value="SepA"/>
    <property type="match status" value="1"/>
</dbReference>
<sequence length="157" mass="18899">MIVNYLKHKFYNLLTTMIVLFIFVLSGAIFLTFLGFGLYGLSRILIYFRLGDFTYNRSMYDNLLYYGSYIIFGYFIIFAVEHLMDYFRKMLPENAYFRGATFHLISYTVATTLFYFIIHLNYVYINIDFWVIMVIIGFLYVCKLQFYPESKNLNNRK</sequence>
<proteinExistence type="evidence at protein level"/>
<keyword id="KW-1003">Cell membrane</keyword>
<keyword id="KW-0472">Membrane</keyword>
<keyword id="KW-0812">Transmembrane</keyword>
<keyword id="KW-1133">Transmembrane helix</keyword>
<keyword id="KW-0813">Transport</keyword>
<evidence type="ECO:0000255" key="1"/>
<evidence type="ECO:0000269" key="2">
    <source>
    </source>
</evidence>
<evidence type="ECO:0000305" key="3"/>
<comment type="function">
    <text evidence="2">Involved in multidrug efflux. Confers low level resistance to drugs such as acriflavine, benzalkonium chloride, chlorhexidine gluconate and ethidium bromide.</text>
</comment>
<comment type="subcellular location">
    <subcellularLocation>
        <location evidence="3">Cell membrane</location>
        <topology evidence="3">Multi-pass membrane protein</topology>
    </subcellularLocation>
</comment>
<comment type="similarity">
    <text evidence="3">Belongs to the multidrug resistance efflux pump SepA family.</text>
</comment>
<accession>Q99S98</accession>
<gene>
    <name type="primary">sepA</name>
</gene>